<evidence type="ECO:0000250" key="1"/>
<evidence type="ECO:0000255" key="2"/>
<evidence type="ECO:0000255" key="3">
    <source>
        <dbReference type="PROSITE-ProRule" id="PRU00040"/>
    </source>
</evidence>
<evidence type="ECO:0000256" key="4">
    <source>
        <dbReference type="SAM" id="MobiDB-lite"/>
    </source>
</evidence>
<proteinExistence type="evidence at transcript level"/>
<sequence length="252" mass="27807">MSSSAHLQDAPPLLSGTLTQNEGQTSLRQSSSCGPSAASASESLSGYTESRIPHSKVRQGKGLRSIFPESRVKRYCCYGGVITVVAIAIVVPLSVTLSVKQMEQTSINNTSAASINNTSAASINNTSAACPSNWTEYGNKCFYFSEYTSNWTFSKDFCAAQGAELARFDTEEELNFLKRYKGSSGYWIGLHRESSEHPWKWTDNTQYNNLIPIRGDGQCGFLSDQLNISSSRVYVERPWICSKPKKYISQSQ</sequence>
<feature type="chain" id="PRO_0000315293" description="C-type lectin domain family 2 member D3">
    <location>
        <begin position="1"/>
        <end position="252"/>
    </location>
</feature>
<feature type="topological domain" description="Cytoplasmic" evidence="2">
    <location>
        <begin position="1"/>
        <end position="78"/>
    </location>
</feature>
<feature type="transmembrane region" description="Helical; Signal-anchor for type II membrane protein" evidence="2">
    <location>
        <begin position="79"/>
        <end position="99"/>
    </location>
</feature>
<feature type="topological domain" description="Extracellular" evidence="2">
    <location>
        <begin position="100"/>
        <end position="252"/>
    </location>
</feature>
<feature type="domain" description="C-type lectin" evidence="3">
    <location>
        <begin position="137"/>
        <end position="242"/>
    </location>
</feature>
<feature type="region of interest" description="Disordered" evidence="4">
    <location>
        <begin position="1"/>
        <end position="58"/>
    </location>
</feature>
<feature type="compositionally biased region" description="Polar residues" evidence="4">
    <location>
        <begin position="16"/>
        <end position="29"/>
    </location>
</feature>
<feature type="compositionally biased region" description="Low complexity" evidence="4">
    <location>
        <begin position="30"/>
        <end position="43"/>
    </location>
</feature>
<feature type="glycosylation site" description="N-linked (GlcNAc...) asparagine" evidence="2">
    <location>
        <position position="150"/>
    </location>
</feature>
<feature type="disulfide bond" evidence="3">
    <location>
        <begin position="158"/>
        <end position="241"/>
    </location>
</feature>
<gene>
    <name type="primary">Clec2d3</name>
</gene>
<dbReference type="EMBL" id="EF100687">
    <property type="protein sequence ID" value="ABO15827.1"/>
    <property type="molecule type" value="mRNA"/>
</dbReference>
<dbReference type="SMR" id="A4KWA6"/>
<dbReference type="FunCoup" id="A4KWA6">
    <property type="interactions" value="48"/>
</dbReference>
<dbReference type="GlyCosmos" id="A4KWA6">
    <property type="glycosylation" value="1 site, No reported glycans"/>
</dbReference>
<dbReference type="GlyGen" id="A4KWA6">
    <property type="glycosylation" value="1 site"/>
</dbReference>
<dbReference type="PaxDb" id="10116-ENSRNOP00000045915"/>
<dbReference type="PeptideAtlas" id="A4KWA6"/>
<dbReference type="UCSC" id="RGD:1588731">
    <property type="organism name" value="rat"/>
</dbReference>
<dbReference type="AGR" id="RGD:1588731"/>
<dbReference type="RGD" id="1588731">
    <property type="gene designation" value="LOC689757"/>
</dbReference>
<dbReference type="eggNOG" id="KOG4297">
    <property type="taxonomic scope" value="Eukaryota"/>
</dbReference>
<dbReference type="InParanoid" id="A4KWA6"/>
<dbReference type="PRO" id="PR:A4KWA6"/>
<dbReference type="Proteomes" id="UP000002494">
    <property type="component" value="Unplaced"/>
</dbReference>
<dbReference type="GO" id="GO:0009897">
    <property type="term" value="C:external side of plasma membrane"/>
    <property type="evidence" value="ECO:0000318"/>
    <property type="project" value="GO_Central"/>
</dbReference>
<dbReference type="GO" id="GO:0030246">
    <property type="term" value="F:carbohydrate binding"/>
    <property type="evidence" value="ECO:0007669"/>
    <property type="project" value="UniProtKB-KW"/>
</dbReference>
<dbReference type="GO" id="GO:0046703">
    <property type="term" value="F:natural killer cell lectin-like receptor binding"/>
    <property type="evidence" value="ECO:0000318"/>
    <property type="project" value="GO_Central"/>
</dbReference>
<dbReference type="CDD" id="cd03593">
    <property type="entry name" value="CLECT_NK_receptors_like"/>
    <property type="match status" value="1"/>
</dbReference>
<dbReference type="Gene3D" id="3.10.100.10">
    <property type="entry name" value="Mannose-Binding Protein A, subunit A"/>
    <property type="match status" value="1"/>
</dbReference>
<dbReference type="InterPro" id="IPR001304">
    <property type="entry name" value="C-type_lectin-like"/>
</dbReference>
<dbReference type="InterPro" id="IPR016186">
    <property type="entry name" value="C-type_lectin-like/link_sf"/>
</dbReference>
<dbReference type="InterPro" id="IPR050828">
    <property type="entry name" value="C-type_lectin/matrix_domain"/>
</dbReference>
<dbReference type="InterPro" id="IPR016187">
    <property type="entry name" value="CTDL_fold"/>
</dbReference>
<dbReference type="InterPro" id="IPR033992">
    <property type="entry name" value="NKR-like_CTLD"/>
</dbReference>
<dbReference type="PANTHER" id="PTHR45710:SF19">
    <property type="entry name" value="C-TYPE LECTIN DOMAIN FAMILY 2 MEMBER D-RELATED"/>
    <property type="match status" value="1"/>
</dbReference>
<dbReference type="PANTHER" id="PTHR45710">
    <property type="entry name" value="C-TYPE LECTIN DOMAIN-CONTAINING PROTEIN 180"/>
    <property type="match status" value="1"/>
</dbReference>
<dbReference type="Pfam" id="PF00059">
    <property type="entry name" value="Lectin_C"/>
    <property type="match status" value="1"/>
</dbReference>
<dbReference type="SMART" id="SM00034">
    <property type="entry name" value="CLECT"/>
    <property type="match status" value="1"/>
</dbReference>
<dbReference type="SUPFAM" id="SSF56436">
    <property type="entry name" value="C-type lectin-like"/>
    <property type="match status" value="1"/>
</dbReference>
<dbReference type="PROSITE" id="PS50041">
    <property type="entry name" value="C_TYPE_LECTIN_2"/>
    <property type="match status" value="1"/>
</dbReference>
<accession>A4KWA6</accession>
<keyword id="KW-1003">Cell membrane</keyword>
<keyword id="KW-1015">Disulfide bond</keyword>
<keyword id="KW-0325">Glycoprotein</keyword>
<keyword id="KW-0430">Lectin</keyword>
<keyword id="KW-0472">Membrane</keyword>
<keyword id="KW-0675">Receptor</keyword>
<keyword id="KW-1185">Reference proteome</keyword>
<keyword id="KW-0735">Signal-anchor</keyword>
<keyword id="KW-0812">Transmembrane</keyword>
<keyword id="KW-1133">Transmembrane helix</keyword>
<name>CL2D3_RAT</name>
<reference key="1">
    <citation type="journal article" date="2007" name="Immunity">
        <title>Cytomegalovirus evasion of innate immunity by subversion of the NKR-P1B:Ocil/Clr-b missing-self axis.</title>
        <authorList>
            <person name="Voigt S."/>
            <person name="Mesci A."/>
            <person name="Ettinger J."/>
            <person name="Fine J.H."/>
            <person name="Chen P."/>
            <person name="Chou W."/>
            <person name="Carlyle J.R."/>
        </authorList>
    </citation>
    <scope>NUCLEOTIDE SEQUENCE [MRNA]</scope>
    <source>
        <strain>Sprague-Dawley</strain>
    </source>
</reference>
<comment type="function">
    <text evidence="1">Lectin-type cell surface receptor.</text>
</comment>
<comment type="subcellular location">
    <subcellularLocation>
        <location evidence="1">Cell membrane</location>
        <topology evidence="1">Single-pass type II membrane protein</topology>
    </subcellularLocation>
</comment>
<organism>
    <name type="scientific">Rattus norvegicus</name>
    <name type="common">Rat</name>
    <dbReference type="NCBI Taxonomy" id="10116"/>
    <lineage>
        <taxon>Eukaryota</taxon>
        <taxon>Metazoa</taxon>
        <taxon>Chordata</taxon>
        <taxon>Craniata</taxon>
        <taxon>Vertebrata</taxon>
        <taxon>Euteleostomi</taxon>
        <taxon>Mammalia</taxon>
        <taxon>Eutheria</taxon>
        <taxon>Euarchontoglires</taxon>
        <taxon>Glires</taxon>
        <taxon>Rodentia</taxon>
        <taxon>Myomorpha</taxon>
        <taxon>Muroidea</taxon>
        <taxon>Muridae</taxon>
        <taxon>Murinae</taxon>
        <taxon>Rattus</taxon>
    </lineage>
</organism>
<protein>
    <recommendedName>
        <fullName>C-type lectin domain family 2 member D3</fullName>
    </recommendedName>
</protein>